<evidence type="ECO:0000255" key="1"/>
<evidence type="ECO:0000256" key="2">
    <source>
        <dbReference type="SAM" id="MobiDB-lite"/>
    </source>
</evidence>
<evidence type="ECO:0000269" key="3">
    <source>
    </source>
</evidence>
<evidence type="ECO:0000269" key="4">
    <source>
    </source>
</evidence>
<evidence type="ECO:0000305" key="5"/>
<evidence type="ECO:0007744" key="6">
    <source>
    </source>
</evidence>
<evidence type="ECO:0007744" key="7">
    <source>
    </source>
</evidence>
<evidence type="ECO:0007744" key="8">
    <source>
    </source>
</evidence>
<evidence type="ECO:0007744" key="9">
    <source>
    </source>
</evidence>
<accession>P38250</accession>
<accession>D6VQ87</accession>
<accession>P89499</accession>
<reference key="1">
    <citation type="journal article" date="1994" name="Yeast">
        <title>Analysis of a 70 kb region on the right arm of yeast chromosome II.</title>
        <authorList>
            <person name="Mannhaupt G."/>
            <person name="Stucka R."/>
            <person name="Ehnle S."/>
            <person name="Vetter I."/>
            <person name="Feldmann H."/>
        </authorList>
    </citation>
    <scope>NUCLEOTIDE SEQUENCE [GENOMIC DNA]</scope>
    <source>
        <strain>ATCC 204508 / S288c</strain>
    </source>
</reference>
<reference key="2">
    <citation type="journal article" date="1994" name="EMBO J.">
        <title>Complete DNA sequence of yeast chromosome II.</title>
        <authorList>
            <person name="Feldmann H."/>
            <person name="Aigle M."/>
            <person name="Aljinovic G."/>
            <person name="Andre B."/>
            <person name="Baclet M.C."/>
            <person name="Barthe C."/>
            <person name="Baur A."/>
            <person name="Becam A.-M."/>
            <person name="Biteau N."/>
            <person name="Boles E."/>
            <person name="Brandt T."/>
            <person name="Brendel M."/>
            <person name="Brueckner M."/>
            <person name="Bussereau F."/>
            <person name="Christiansen C."/>
            <person name="Contreras R."/>
            <person name="Crouzet M."/>
            <person name="Cziepluch C."/>
            <person name="Demolis N."/>
            <person name="Delaveau T."/>
            <person name="Doignon F."/>
            <person name="Domdey H."/>
            <person name="Duesterhus S."/>
            <person name="Dubois E."/>
            <person name="Dujon B."/>
            <person name="El Bakkoury M."/>
            <person name="Entian K.-D."/>
            <person name="Feuermann M."/>
            <person name="Fiers W."/>
            <person name="Fobo G.M."/>
            <person name="Fritz C."/>
            <person name="Gassenhuber J."/>
            <person name="Glansdorff N."/>
            <person name="Goffeau A."/>
            <person name="Grivell L.A."/>
            <person name="de Haan M."/>
            <person name="Hein C."/>
            <person name="Herbert C.J."/>
            <person name="Hollenberg C.P."/>
            <person name="Holmstroem K."/>
            <person name="Jacq C."/>
            <person name="Jacquet M."/>
            <person name="Jauniaux J.-C."/>
            <person name="Jonniaux J.-L."/>
            <person name="Kallesoee T."/>
            <person name="Kiesau P."/>
            <person name="Kirchrath L."/>
            <person name="Koetter P."/>
            <person name="Korol S."/>
            <person name="Liebl S."/>
            <person name="Logghe M."/>
            <person name="Lohan A.J.E."/>
            <person name="Louis E.J."/>
            <person name="Li Z.Y."/>
            <person name="Maat M.J."/>
            <person name="Mallet L."/>
            <person name="Mannhaupt G."/>
            <person name="Messenguy F."/>
            <person name="Miosga T."/>
            <person name="Molemans F."/>
            <person name="Mueller S."/>
            <person name="Nasr F."/>
            <person name="Obermaier B."/>
            <person name="Perea J."/>
            <person name="Pierard A."/>
            <person name="Piravandi E."/>
            <person name="Pohl F.M."/>
            <person name="Pohl T.M."/>
            <person name="Potier S."/>
            <person name="Proft M."/>
            <person name="Purnelle B."/>
            <person name="Ramezani Rad M."/>
            <person name="Rieger M."/>
            <person name="Rose M."/>
            <person name="Schaaff-Gerstenschlaeger I."/>
            <person name="Scherens B."/>
            <person name="Schwarzlose C."/>
            <person name="Skala J."/>
            <person name="Slonimski P.P."/>
            <person name="Smits P.H.M."/>
            <person name="Souciet J.-L."/>
            <person name="Steensma H.Y."/>
            <person name="Stucka R."/>
            <person name="Urrestarazu L.A."/>
            <person name="van der Aart Q.J.M."/>
            <person name="Van Dyck L."/>
            <person name="Vassarotti A."/>
            <person name="Vetter I."/>
            <person name="Vierendeels F."/>
            <person name="Vissers S."/>
            <person name="Wagner G."/>
            <person name="de Wergifosse P."/>
            <person name="Wolfe K.H."/>
            <person name="Zagulski M."/>
            <person name="Zimmermann F.K."/>
            <person name="Mewes H.-W."/>
            <person name="Kleine K."/>
        </authorList>
    </citation>
    <scope>NUCLEOTIDE SEQUENCE [LARGE SCALE GENOMIC DNA]</scope>
    <source>
        <strain>ATCC 204508 / S288c</strain>
    </source>
</reference>
<reference key="3">
    <citation type="journal article" date="2014" name="G3 (Bethesda)">
        <title>The reference genome sequence of Saccharomyces cerevisiae: Then and now.</title>
        <authorList>
            <person name="Engel S.R."/>
            <person name="Dietrich F.S."/>
            <person name="Fisk D.G."/>
            <person name="Binkley G."/>
            <person name="Balakrishnan R."/>
            <person name="Costanzo M.C."/>
            <person name="Dwight S.S."/>
            <person name="Hitz B.C."/>
            <person name="Karra K."/>
            <person name="Nash R.S."/>
            <person name="Weng S."/>
            <person name="Wong E.D."/>
            <person name="Lloyd P."/>
            <person name="Skrzypek M.S."/>
            <person name="Miyasato S.R."/>
            <person name="Simison M."/>
            <person name="Cherry J.M."/>
        </authorList>
    </citation>
    <scope>GENOME REANNOTATION</scope>
    <scope>SEQUENCE REVISION TO 243</scope>
    <source>
        <strain>ATCC 204508 / S288c</strain>
    </source>
</reference>
<reference key="4">
    <citation type="journal article" date="2005" name="Eukaryot. Cell">
        <title>Interaction among Btn1p, Btn2p, and Ist2p reveals potential interplay among the vacuole, amino acid levels, and ion homeostasis in the yeast Saccharomyces cerevisiae.</title>
        <authorList>
            <person name="Kim Y."/>
            <person name="Chattopadhyay S."/>
            <person name="Locke S."/>
            <person name="Pearce D.A."/>
        </authorList>
    </citation>
    <scope>FUNCTION</scope>
    <scope>INTERACTION WITH BTN2</scope>
    <scope>SUBCELLULAR LOCATION</scope>
</reference>
<reference key="5">
    <citation type="journal article" date="2000" name="Science">
        <title>Plasma membrane compartmentalization in yeast by messenger RNA transport and a septin diffusion barrier.</title>
        <authorList>
            <person name="Takizawa P.A."/>
            <person name="DeRisi J.L."/>
            <person name="Wilhelm J.E."/>
            <person name="Vale R.D."/>
        </authorList>
    </citation>
    <scope>SUBCELLULAR LOCATION</scope>
</reference>
<reference key="6">
    <citation type="journal article" date="2005" name="Mol. Cell. Proteomics">
        <title>Quantitative phosphoproteomics applied to the yeast pheromone signaling pathway.</title>
        <authorList>
            <person name="Gruhler A."/>
            <person name="Olsen J.V."/>
            <person name="Mohammed S."/>
            <person name="Mortensen P."/>
            <person name="Faergeman N.J."/>
            <person name="Mann M."/>
            <person name="Jensen O.N."/>
        </authorList>
    </citation>
    <scope>IDENTIFICATION BY MASS SPECTROMETRY [LARGE SCALE ANALYSIS]</scope>
    <source>
        <strain>YAL6B</strain>
    </source>
</reference>
<reference key="7">
    <citation type="journal article" date="2006" name="Proc. Natl. Acad. Sci. U.S.A.">
        <title>A global topology map of the Saccharomyces cerevisiae membrane proteome.</title>
        <authorList>
            <person name="Kim H."/>
            <person name="Melen K."/>
            <person name="Oesterberg M."/>
            <person name="von Heijne G."/>
        </authorList>
    </citation>
    <scope>TOPOLOGY [LARGE SCALE ANALYSIS]</scope>
    <source>
        <strain>ATCC 208353 / W303-1A</strain>
    </source>
</reference>
<reference key="8">
    <citation type="journal article" date="2007" name="J. Proteome Res.">
        <title>Large-scale phosphorylation analysis of alpha-factor-arrested Saccharomyces cerevisiae.</title>
        <authorList>
            <person name="Li X."/>
            <person name="Gerber S.A."/>
            <person name="Rudner A.D."/>
            <person name="Beausoleil S.A."/>
            <person name="Haas W."/>
            <person name="Villen J."/>
            <person name="Elias J.E."/>
            <person name="Gygi S.P."/>
        </authorList>
    </citation>
    <scope>PHOSPHORYLATION [LARGE SCALE ANALYSIS] AT THR-701; SER-704; SER-720; THR-726; SER-729 AND SER-757</scope>
    <scope>IDENTIFICATION BY MASS SPECTROMETRY [LARGE SCALE ANALYSIS]</scope>
    <source>
        <strain>ADR376</strain>
    </source>
</reference>
<reference key="9">
    <citation type="journal article" date="2007" name="Proc. Natl. Acad. Sci. U.S.A.">
        <title>Analysis of phosphorylation sites on proteins from Saccharomyces cerevisiae by electron transfer dissociation (ETD) mass spectrometry.</title>
        <authorList>
            <person name="Chi A."/>
            <person name="Huttenhower C."/>
            <person name="Geer L.Y."/>
            <person name="Coon J.J."/>
            <person name="Syka J.E.P."/>
            <person name="Bai D.L."/>
            <person name="Shabanowitz J."/>
            <person name="Burke D.J."/>
            <person name="Troyanskaya O.G."/>
            <person name="Hunt D.F."/>
        </authorList>
    </citation>
    <scope>PHOSPHORYLATION [LARGE SCALE ANALYSIS] AT SER-638 AND SER-757</scope>
    <scope>IDENTIFICATION BY MASS SPECTROMETRY [LARGE SCALE ANALYSIS]</scope>
</reference>
<reference key="10">
    <citation type="journal article" date="2008" name="Mol. Cell. Proteomics">
        <title>A multidimensional chromatography technology for in-depth phosphoproteome analysis.</title>
        <authorList>
            <person name="Albuquerque C.P."/>
            <person name="Smolka M.B."/>
            <person name="Payne S.H."/>
            <person name="Bafna V."/>
            <person name="Eng J."/>
            <person name="Zhou H."/>
        </authorList>
    </citation>
    <scope>PHOSPHORYLATION [LARGE SCALE ANALYSIS] AT THR-726; SER-757 AND SER-793</scope>
    <scope>IDENTIFICATION BY MASS SPECTROMETRY [LARGE SCALE ANALYSIS]</scope>
</reference>
<reference key="11">
    <citation type="journal article" date="2009" name="Science">
        <title>Global analysis of Cdk1 substrate phosphorylation sites provides insights into evolution.</title>
        <authorList>
            <person name="Holt L.J."/>
            <person name="Tuch B.B."/>
            <person name="Villen J."/>
            <person name="Johnson A.D."/>
            <person name="Gygi S.P."/>
            <person name="Morgan D.O."/>
        </authorList>
    </citation>
    <scope>PHOSPHORYLATION [LARGE SCALE ANALYSIS] AT THR-701; SER-704; SER-720; THR-726; SER-729; TYR-730; SER-793; SER-844; SER-847 AND THR-850</scope>
    <scope>IDENTIFICATION BY MASS SPECTROMETRY [LARGE SCALE ANALYSIS]</scope>
</reference>
<proteinExistence type="evidence at protein level"/>
<feature type="chain" id="PRO_0000084261" description="Increased sodium tolerance protein 2">
    <location>
        <begin position="1"/>
        <end position="946"/>
    </location>
</feature>
<feature type="topological domain" description="Cytoplasmic" evidence="1">
    <location>
        <begin position="1"/>
        <end position="121"/>
    </location>
</feature>
<feature type="transmembrane region" description="Helical" evidence="1">
    <location>
        <begin position="122"/>
        <end position="142"/>
    </location>
</feature>
<feature type="topological domain" description="Extracellular" evidence="1">
    <location>
        <begin position="143"/>
        <end position="153"/>
    </location>
</feature>
<feature type="transmembrane region" description="Helical" evidence="1">
    <location>
        <begin position="154"/>
        <end position="174"/>
    </location>
</feature>
<feature type="topological domain" description="Cytoplasmic" evidence="1">
    <location>
        <begin position="175"/>
        <end position="217"/>
    </location>
</feature>
<feature type="transmembrane region" description="Helical" evidence="1">
    <location>
        <begin position="218"/>
        <end position="238"/>
    </location>
</feature>
<feature type="topological domain" description="Extracellular" evidence="1">
    <location>
        <begin position="239"/>
        <end position="253"/>
    </location>
</feature>
<feature type="transmembrane region" description="Helical" evidence="1">
    <location>
        <begin position="254"/>
        <end position="274"/>
    </location>
</feature>
<feature type="topological domain" description="Cytoplasmic" evidence="1">
    <location>
        <begin position="275"/>
        <end position="302"/>
    </location>
</feature>
<feature type="transmembrane region" description="Helical" evidence="1">
    <location>
        <begin position="303"/>
        <end position="323"/>
    </location>
</feature>
<feature type="topological domain" description="Extracellular" evidence="1">
    <location>
        <begin position="324"/>
        <end position="447"/>
    </location>
</feature>
<feature type="transmembrane region" description="Helical" evidence="1">
    <location>
        <begin position="448"/>
        <end position="468"/>
    </location>
</feature>
<feature type="topological domain" description="Cytoplasmic" evidence="1">
    <location>
        <begin position="469"/>
        <end position="505"/>
    </location>
</feature>
<feature type="transmembrane region" description="Helical" evidence="1">
    <location>
        <begin position="506"/>
        <end position="526"/>
    </location>
</feature>
<feature type="topological domain" description="Extracellular" evidence="1">
    <location>
        <begin position="527"/>
        <end position="563"/>
    </location>
</feature>
<feature type="transmembrane region" description="Helical" evidence="1">
    <location>
        <begin position="564"/>
        <end position="584"/>
    </location>
</feature>
<feature type="topological domain" description="Cytoplasmic" evidence="1">
    <location>
        <begin position="585"/>
        <end position="946"/>
    </location>
</feature>
<feature type="region of interest" description="Disordered" evidence="2">
    <location>
        <begin position="617"/>
        <end position="638"/>
    </location>
</feature>
<feature type="region of interest" description="Disordered" evidence="2">
    <location>
        <begin position="665"/>
        <end position="718"/>
    </location>
</feature>
<feature type="region of interest" description="Disordered" evidence="2">
    <location>
        <begin position="759"/>
        <end position="784"/>
    </location>
</feature>
<feature type="region of interest" description="Disordered" evidence="2">
    <location>
        <begin position="846"/>
        <end position="946"/>
    </location>
</feature>
<feature type="compositionally biased region" description="Basic and acidic residues" evidence="2">
    <location>
        <begin position="628"/>
        <end position="638"/>
    </location>
</feature>
<feature type="compositionally biased region" description="Low complexity" evidence="2">
    <location>
        <begin position="671"/>
        <end position="689"/>
    </location>
</feature>
<feature type="compositionally biased region" description="Low complexity" evidence="2">
    <location>
        <begin position="764"/>
        <end position="775"/>
    </location>
</feature>
<feature type="compositionally biased region" description="Polar residues" evidence="2">
    <location>
        <begin position="859"/>
        <end position="868"/>
    </location>
</feature>
<feature type="compositionally biased region" description="Low complexity" evidence="2">
    <location>
        <begin position="884"/>
        <end position="893"/>
    </location>
</feature>
<feature type="compositionally biased region" description="Basic residues" evidence="2">
    <location>
        <begin position="895"/>
        <end position="905"/>
    </location>
</feature>
<feature type="compositionally biased region" description="Low complexity" evidence="2">
    <location>
        <begin position="916"/>
        <end position="927"/>
    </location>
</feature>
<feature type="compositionally biased region" description="Basic residues" evidence="2">
    <location>
        <begin position="931"/>
        <end position="946"/>
    </location>
</feature>
<feature type="modified residue" description="Phosphoserine" evidence="6">
    <location>
        <position position="638"/>
    </location>
</feature>
<feature type="modified residue" description="Phosphothreonine" evidence="7 9">
    <location>
        <position position="701"/>
    </location>
</feature>
<feature type="modified residue" description="Phosphoserine" evidence="7 9">
    <location>
        <position position="704"/>
    </location>
</feature>
<feature type="modified residue" description="Phosphoserine" evidence="7 9">
    <location>
        <position position="720"/>
    </location>
</feature>
<feature type="modified residue" description="Phosphothreonine" evidence="7 8 9">
    <location>
        <position position="726"/>
    </location>
</feature>
<feature type="modified residue" description="Phosphoserine" evidence="7 9">
    <location>
        <position position="729"/>
    </location>
</feature>
<feature type="modified residue" description="Phosphotyrosine" evidence="9">
    <location>
        <position position="730"/>
    </location>
</feature>
<feature type="modified residue" description="Phosphoserine" evidence="6 7 8">
    <location>
        <position position="757"/>
    </location>
</feature>
<feature type="modified residue" description="Phosphoserine" evidence="8 9">
    <location>
        <position position="793"/>
    </location>
</feature>
<feature type="modified residue" description="Phosphoserine" evidence="9">
    <location>
        <position position="844"/>
    </location>
</feature>
<feature type="modified residue" description="Phosphoserine" evidence="9">
    <location>
        <position position="847"/>
    </location>
</feature>
<feature type="modified residue" description="Phosphothreonine" evidence="9">
    <location>
        <position position="850"/>
    </location>
</feature>
<feature type="sequence conflict" description="In Ref. 1; CAA55593 and 2; CAA85034/CAA85037." evidence="5" ref="1 2">
    <original>I</original>
    <variation>Y</variation>
    <location>
        <position position="243"/>
    </location>
</feature>
<sequence length="946" mass="105854">MSQTITSLDPNCVIVFNKTSSANEKSLNVEFKRLNIHSIIEPGHDLQTSYAFIRIHQDNAKPLFSFLQNLDFIESIIPYHDTELSDDLHKLISISKSKILEAPKQYELYNLSNLTNNPKQSLYFAFLQNYIKWLIPFSFFGLSIRFLSNFTYEFNSTYSLFAILWTLSFTAFWLYKYEPFWSDRLSKYSSFSTIEFLQDKQKAQKKASSVIMLKKCCFIPVALLFGAILLSFQLYCFALEIFIKQIYNGPMISILSFLPTILICTFTPVLTVIYNKYFVEPMTKWENHSSVVNAKKSKEAKNFVIIFLSSYVPLLITLFLYLPMGHLLTAEIRTKVFNAFSILARLPTHDSDFIIDTKRYEDQFFYFIVINQLIQFSMENFVPSLVSIAQQKINGPNPNFVKAESEIGKAQLSSSDMKIWSKVKSYQTDPWGATFDLDANFKKLLLQFGYLVMFSTIWPLAPFICLIVNLIVYQVDLRKAVLYSKPEYFPFPIYDKPSSVSNTQKLTVGLWNSVLVMFSILGCVITATLTYMYQSCNIPGVGAHTSIHTNKAWYLANPINHSWINIVLYAVFIEHVSVAIFFLFSSILKSSHDDVANGIVPKHVVNVQNPPKQEVFEKIPSPEFNSNNEKELVQRKGSANEKLHQELGEKQPASSANGYEAHAATHANNDPSSLSSASSPSLSSSSSSSKTGVVKAVDNDTAGSAGKKPLATESTEKRNSLVKVPTVGSYGVAGATLPETIPTSKNYYLRFDEDGKSIRDAKSSAESSNATNNNTLGTESKLLPDGDAVDALSRKIDQIPKIAVTGGENNENTQAKDDAATKTPLIKDANIKPVVNAAVNDNQSKVSVATEQTKKTEVSTKNGPSRSISTKETKDSARPSNNNTTTTTTTDATQPHHHHHHHRHRDAGVKNVTNNSKTTESSSSSSAAKEKPKHKKGLLHKLKKKL</sequence>
<gene>
    <name type="primary">IST2</name>
    <name type="ordered locus">YBR086C</name>
    <name type="ORF">YBR0809</name>
</gene>
<name>IST2_YEAST</name>
<comment type="function">
    <text evidence="4">May be involved in ion homeostasis together with BTN1 or BTN2.</text>
</comment>
<comment type="subunit">
    <text evidence="4">Interacts with BTN2.</text>
</comment>
<comment type="interaction">
    <interactant intactId="EBI-21520">
        <id>P38250</id>
    </interactant>
    <interactant intactId="EBI-3796">
        <id>P53286</id>
        <label>BTN2</label>
    </interactant>
    <organismsDiffer>false</organismsDiffer>
    <experiments>2</experiments>
</comment>
<comment type="subcellular location">
    <subcellularLocation>
        <location evidence="3 4">Cell membrane</location>
        <topology evidence="3 4">Multi-pass membrane protein</topology>
    </subcellularLocation>
    <text>Correct localization requires BTN2. Localizes to the mother cell in small budded cells and to the bud in medium and large budded cells. Transported to the bud tip by an actomyosin based process. Compartmentalization maintained by a septin mediated membrane diffusion barrier at the mother-bud neck.</text>
</comment>
<organism>
    <name type="scientific">Saccharomyces cerevisiae (strain ATCC 204508 / S288c)</name>
    <name type="common">Baker's yeast</name>
    <dbReference type="NCBI Taxonomy" id="559292"/>
    <lineage>
        <taxon>Eukaryota</taxon>
        <taxon>Fungi</taxon>
        <taxon>Dikarya</taxon>
        <taxon>Ascomycota</taxon>
        <taxon>Saccharomycotina</taxon>
        <taxon>Saccharomycetes</taxon>
        <taxon>Saccharomycetales</taxon>
        <taxon>Saccharomycetaceae</taxon>
        <taxon>Saccharomyces</taxon>
    </lineage>
</organism>
<dbReference type="EMBL" id="X78993">
    <property type="protein sequence ID" value="CAA55593.1"/>
    <property type="molecule type" value="Genomic_DNA"/>
</dbReference>
<dbReference type="EMBL" id="Z35955">
    <property type="protein sequence ID" value="CAA85034.1"/>
    <property type="molecule type" value="Genomic_DNA"/>
</dbReference>
<dbReference type="EMBL" id="Z35956">
    <property type="protein sequence ID" value="CAA85037.1"/>
    <property type="molecule type" value="Genomic_DNA"/>
</dbReference>
<dbReference type="EMBL" id="BK006936">
    <property type="protein sequence ID" value="DAA07207.1"/>
    <property type="molecule type" value="Genomic_DNA"/>
</dbReference>
<dbReference type="PIR" id="S48255">
    <property type="entry name" value="S48255"/>
</dbReference>
<dbReference type="RefSeq" id="NP_009643.2">
    <property type="nucleotide sequence ID" value="NM_001178434.1"/>
</dbReference>
<dbReference type="SMR" id="P38250"/>
<dbReference type="BioGRID" id="32792">
    <property type="interactions" value="235"/>
</dbReference>
<dbReference type="DIP" id="DIP-6714N"/>
<dbReference type="FunCoup" id="P38250">
    <property type="interactions" value="404"/>
</dbReference>
<dbReference type="IntAct" id="P38250">
    <property type="interactions" value="29"/>
</dbReference>
<dbReference type="MINT" id="P38250"/>
<dbReference type="STRING" id="4932.YBR086C"/>
<dbReference type="TCDB" id="1.A.17.1.19">
    <property type="family name" value="the calcium-dependent chloride channel (ca-clc) family"/>
</dbReference>
<dbReference type="iPTMnet" id="P38250"/>
<dbReference type="PaxDb" id="4932-YBR086C"/>
<dbReference type="PeptideAtlas" id="P38250"/>
<dbReference type="EnsemblFungi" id="YBR086C_mRNA">
    <property type="protein sequence ID" value="YBR086C"/>
    <property type="gene ID" value="YBR086C"/>
</dbReference>
<dbReference type="GeneID" id="852382"/>
<dbReference type="KEGG" id="sce:YBR086C"/>
<dbReference type="AGR" id="SGD:S000000290"/>
<dbReference type="SGD" id="S000000290">
    <property type="gene designation" value="IST2"/>
</dbReference>
<dbReference type="VEuPathDB" id="FungiDB:YBR086C"/>
<dbReference type="eggNOG" id="KOG2513">
    <property type="taxonomic scope" value="Eukaryota"/>
</dbReference>
<dbReference type="HOGENOM" id="CLU_014462_0_0_1"/>
<dbReference type="InParanoid" id="P38250"/>
<dbReference type="OMA" id="MFSTIWP"/>
<dbReference type="OrthoDB" id="296386at2759"/>
<dbReference type="BioCyc" id="YEAST:G3O-29053-MONOMER"/>
<dbReference type="Reactome" id="R-SCE-2672351">
    <property type="pathway name" value="Stimuli-sensing channels"/>
</dbReference>
<dbReference type="Reactome" id="R-SCE-6798695">
    <property type="pathway name" value="Neutrophil degranulation"/>
</dbReference>
<dbReference type="BioGRID-ORCS" id="852382">
    <property type="hits" value="6 hits in 10 CRISPR screens"/>
</dbReference>
<dbReference type="PRO" id="PR:P38250"/>
<dbReference type="Proteomes" id="UP000002311">
    <property type="component" value="Chromosome II"/>
</dbReference>
<dbReference type="RNAct" id="P38250">
    <property type="molecule type" value="protein"/>
</dbReference>
<dbReference type="GO" id="GO:0071944">
    <property type="term" value="C:cell periphery"/>
    <property type="evidence" value="ECO:0007005"/>
    <property type="project" value="SGD"/>
</dbReference>
<dbReference type="GO" id="GO:0033101">
    <property type="term" value="C:cellular bud membrane"/>
    <property type="evidence" value="ECO:0000314"/>
    <property type="project" value="SGD"/>
</dbReference>
<dbReference type="GO" id="GO:0032541">
    <property type="term" value="C:cortical endoplasmic reticulum"/>
    <property type="evidence" value="ECO:0000314"/>
    <property type="project" value="SGD"/>
</dbReference>
<dbReference type="GO" id="GO:0005886">
    <property type="term" value="C:plasma membrane"/>
    <property type="evidence" value="ECO:0000314"/>
    <property type="project" value="SGD"/>
</dbReference>
<dbReference type="GO" id="GO:0005254">
    <property type="term" value="F:chloride channel activity"/>
    <property type="evidence" value="ECO:0000318"/>
    <property type="project" value="GO_Central"/>
</dbReference>
<dbReference type="GO" id="GO:0008289">
    <property type="term" value="F:lipid binding"/>
    <property type="evidence" value="ECO:0000314"/>
    <property type="project" value="SGD"/>
</dbReference>
<dbReference type="GO" id="GO:1902476">
    <property type="term" value="P:chloride transmembrane transport"/>
    <property type="evidence" value="ECO:0000318"/>
    <property type="project" value="GO_Central"/>
</dbReference>
<dbReference type="GO" id="GO:0090158">
    <property type="term" value="P:endoplasmic reticulum membrane organization"/>
    <property type="evidence" value="ECO:0000316"/>
    <property type="project" value="SGD"/>
</dbReference>
<dbReference type="GO" id="GO:0072659">
    <property type="term" value="P:protein localization to plasma membrane"/>
    <property type="evidence" value="ECO:0000315"/>
    <property type="project" value="SGD"/>
</dbReference>
<dbReference type="GO" id="GO:0060304">
    <property type="term" value="P:regulation of phosphatidylinositol dephosphorylation"/>
    <property type="evidence" value="ECO:0000316"/>
    <property type="project" value="SGD"/>
</dbReference>
<dbReference type="InterPro" id="IPR007632">
    <property type="entry name" value="Anoctamin"/>
</dbReference>
<dbReference type="InterPro" id="IPR049452">
    <property type="entry name" value="Anoctamin_TM"/>
</dbReference>
<dbReference type="PANTHER" id="PTHR12308">
    <property type="entry name" value="ANOCTAMIN"/>
    <property type="match status" value="1"/>
</dbReference>
<dbReference type="PANTHER" id="PTHR12308:SF73">
    <property type="entry name" value="ANOCTAMIN"/>
    <property type="match status" value="1"/>
</dbReference>
<dbReference type="Pfam" id="PF04547">
    <property type="entry name" value="Anoctamin"/>
    <property type="match status" value="1"/>
</dbReference>
<protein>
    <recommendedName>
        <fullName>Increased sodium tolerance protein 2</fullName>
    </recommendedName>
</protein>
<keyword id="KW-1003">Cell membrane</keyword>
<keyword id="KW-0472">Membrane</keyword>
<keyword id="KW-0597">Phosphoprotein</keyword>
<keyword id="KW-1185">Reference proteome</keyword>
<keyword id="KW-0812">Transmembrane</keyword>
<keyword id="KW-1133">Transmembrane helix</keyword>